<dbReference type="EC" id="1.18.1.-"/>
<dbReference type="EMBL" id="CP000036">
    <property type="protein sequence ID" value="ABB67333.1"/>
    <property type="status" value="ALT_SEQ"/>
    <property type="molecule type" value="Genomic_DNA"/>
</dbReference>
<dbReference type="SMR" id="Q31X75"/>
<dbReference type="KEGG" id="sbo:SBO_2807"/>
<dbReference type="HOGENOM" id="CLU_003291_4_4_6"/>
<dbReference type="UniPathway" id="UPA00638"/>
<dbReference type="Proteomes" id="UP000007067">
    <property type="component" value="Chromosome"/>
</dbReference>
<dbReference type="GO" id="GO:0005737">
    <property type="term" value="C:cytoplasm"/>
    <property type="evidence" value="ECO:0007669"/>
    <property type="project" value="UniProtKB-SubCell"/>
</dbReference>
<dbReference type="GO" id="GO:0016731">
    <property type="term" value="F:oxidoreductase activity, acting on iron-sulfur proteins as donors, NAD or NADP as acceptor"/>
    <property type="evidence" value="ECO:0007669"/>
    <property type="project" value="UniProtKB-UniRule"/>
</dbReference>
<dbReference type="FunFam" id="3.30.390.120:FF:000001">
    <property type="entry name" value="Nitric oxide reductase FlRd-NAD(+) reductase"/>
    <property type="match status" value="1"/>
</dbReference>
<dbReference type="FunFam" id="3.50.50.60:FF:000075">
    <property type="entry name" value="Nitric oxide reductase FlRd-NAD(+) reductase"/>
    <property type="match status" value="1"/>
</dbReference>
<dbReference type="Gene3D" id="3.30.390.120">
    <property type="match status" value="1"/>
</dbReference>
<dbReference type="Gene3D" id="3.50.50.60">
    <property type="entry name" value="FAD/NAD(P)-binding domain"/>
    <property type="match status" value="2"/>
</dbReference>
<dbReference type="HAMAP" id="MF_01313">
    <property type="entry name" value="NorW"/>
    <property type="match status" value="1"/>
</dbReference>
<dbReference type="InterPro" id="IPR050260">
    <property type="entry name" value="FAD-bd_OxRdtase"/>
</dbReference>
<dbReference type="InterPro" id="IPR036188">
    <property type="entry name" value="FAD/NAD-bd_sf"/>
</dbReference>
<dbReference type="InterPro" id="IPR023753">
    <property type="entry name" value="FAD/NAD-binding_dom"/>
</dbReference>
<dbReference type="InterPro" id="IPR023961">
    <property type="entry name" value="NO_rdtase_NorW"/>
</dbReference>
<dbReference type="InterPro" id="IPR041364">
    <property type="entry name" value="Rbx-bd"/>
</dbReference>
<dbReference type="NCBIfam" id="NF003437">
    <property type="entry name" value="PRK04965.1"/>
    <property type="match status" value="1"/>
</dbReference>
<dbReference type="PANTHER" id="PTHR43429:SF3">
    <property type="entry name" value="NITRITE REDUCTASE [NAD(P)H]"/>
    <property type="match status" value="1"/>
</dbReference>
<dbReference type="PANTHER" id="PTHR43429">
    <property type="entry name" value="PYRIDINE NUCLEOTIDE-DISULFIDE OXIDOREDUCTASE DOMAIN-CONTAINING"/>
    <property type="match status" value="1"/>
</dbReference>
<dbReference type="Pfam" id="PF07992">
    <property type="entry name" value="Pyr_redox_2"/>
    <property type="match status" value="1"/>
</dbReference>
<dbReference type="Pfam" id="PF18113">
    <property type="entry name" value="Rbx_binding"/>
    <property type="match status" value="1"/>
</dbReference>
<dbReference type="PRINTS" id="PR00368">
    <property type="entry name" value="FADPNR"/>
</dbReference>
<dbReference type="PRINTS" id="PR00411">
    <property type="entry name" value="PNDRDTASEI"/>
</dbReference>
<dbReference type="SUPFAM" id="SSF51905">
    <property type="entry name" value="FAD/NAD(P)-binding domain"/>
    <property type="match status" value="1"/>
</dbReference>
<accession>Q31X75</accession>
<gene>
    <name type="primary">norW</name>
    <name type="synonym">flrR</name>
    <name type="ordered locus">SBO_2807</name>
</gene>
<organism>
    <name type="scientific">Shigella boydii serotype 4 (strain Sb227)</name>
    <dbReference type="NCBI Taxonomy" id="300268"/>
    <lineage>
        <taxon>Bacteria</taxon>
        <taxon>Pseudomonadati</taxon>
        <taxon>Pseudomonadota</taxon>
        <taxon>Gammaproteobacteria</taxon>
        <taxon>Enterobacterales</taxon>
        <taxon>Enterobacteriaceae</taxon>
        <taxon>Shigella</taxon>
    </lineage>
</organism>
<name>NORW_SHIBS</name>
<evidence type="ECO:0000250" key="1"/>
<evidence type="ECO:0000305" key="2"/>
<protein>
    <recommendedName>
        <fullName>Nitric oxide reductase FlRd-NAD(+) reductase</fullName>
        <ecNumber>1.18.1.-</ecNumber>
    </recommendedName>
    <alternativeName>
        <fullName>Flavorubredoxin reductase</fullName>
        <shortName>FlRd-reductase</shortName>
        <shortName>FlavoRb reductase</shortName>
    </alternativeName>
</protein>
<comment type="function">
    <text evidence="1">One of at least two accessory proteins for anaerobic nitric oxide (NO) reductase. Reduces the rubredoxin moiety of NO reductase (By similarity).</text>
</comment>
<comment type="catalytic activity">
    <reaction>
        <text>2 reduced [nitric oxide reductase rubredoxin domain] + NAD(+) + H(+) = 2 oxidized [nitric oxide reductase rubredoxin domain] + NADH</text>
        <dbReference type="Rhea" id="RHEA:42960"/>
        <dbReference type="Rhea" id="RHEA-COMP:10304"/>
        <dbReference type="Rhea" id="RHEA-COMP:10305"/>
        <dbReference type="ChEBI" id="CHEBI:15378"/>
        <dbReference type="ChEBI" id="CHEBI:29033"/>
        <dbReference type="ChEBI" id="CHEBI:29034"/>
        <dbReference type="ChEBI" id="CHEBI:57540"/>
        <dbReference type="ChEBI" id="CHEBI:57945"/>
    </reaction>
</comment>
<comment type="cofactor">
    <cofactor evidence="1">
        <name>FAD</name>
        <dbReference type="ChEBI" id="CHEBI:57692"/>
    </cofactor>
</comment>
<comment type="pathway">
    <text>Nitrogen metabolism; nitric oxide reduction.</text>
</comment>
<comment type="subcellular location">
    <subcellularLocation>
        <location evidence="1">Cytoplasm</location>
    </subcellularLocation>
</comment>
<comment type="similarity">
    <text evidence="2">Belongs to the FAD-dependent oxidoreductase family.</text>
</comment>
<comment type="sequence caution" evidence="2">
    <conflict type="erroneous termination">
        <sequence resource="EMBL-CDS" id="ABB67333"/>
    </conflict>
    <text>Truncated C-terminus.</text>
</comment>
<feature type="chain" id="PRO_0000305610" description="Nitric oxide reductase FlRd-NAD(+) reductase">
    <location>
        <begin position="1"/>
        <end position="377"/>
    </location>
</feature>
<keyword id="KW-0963">Cytoplasm</keyword>
<keyword id="KW-0274">FAD</keyword>
<keyword id="KW-0285">Flavoprotein</keyword>
<keyword id="KW-0520">NAD</keyword>
<keyword id="KW-0560">Oxidoreductase</keyword>
<reference key="1">
    <citation type="journal article" date="2005" name="Nucleic Acids Res.">
        <title>Genome dynamics and diversity of Shigella species, the etiologic agents of bacillary dysentery.</title>
        <authorList>
            <person name="Yang F."/>
            <person name="Yang J."/>
            <person name="Zhang X."/>
            <person name="Chen L."/>
            <person name="Jiang Y."/>
            <person name="Yan Y."/>
            <person name="Tang X."/>
            <person name="Wang J."/>
            <person name="Xiong Z."/>
            <person name="Dong J."/>
            <person name="Xue Y."/>
            <person name="Zhu Y."/>
            <person name="Xu X."/>
            <person name="Sun L."/>
            <person name="Chen S."/>
            <person name="Nie H."/>
            <person name="Peng J."/>
            <person name="Xu J."/>
            <person name="Wang Y."/>
            <person name="Yuan Z."/>
            <person name="Wen Y."/>
            <person name="Yao Z."/>
            <person name="Shen Y."/>
            <person name="Qiang B."/>
            <person name="Hou Y."/>
            <person name="Yu J."/>
            <person name="Jin Q."/>
        </authorList>
    </citation>
    <scope>NUCLEOTIDE SEQUENCE [LARGE SCALE GENOMIC DNA]</scope>
    <source>
        <strain>Sb227</strain>
    </source>
</reference>
<proteinExistence type="inferred from homology"/>
<sequence>MSNGIVIIGSGFAARQLVKNIRKQDATIPLTLIAADSMDEYNKPDLSHVISQGQRADDLTRQTAGEFAEQFNLHLFPQTWVTDIDAEARVVKSQNNQWQYDKLVLATGASAFVPPVPGRELMLTLNSQQEYRACETQLRDARRVLIVGGGLIGSELAMDFCRAGKAVTLIDNAASILASLMPPEVSSRLQHRLTEMGVYLLLKSQLQGLEKTDSGILATLDHQRSIEVDAVIAATGLRPETALARRAGLTINRGVCVDSYLQTSNDDIYALGDYAEINGQVLPFLQPIQLSAMVLAKNLLGNNTPLKLPTMLVKIKTPELPLHLAGETQRQDLRWQINTERQGMVARGVDDADQLRAFVVSEDRMKEAFGLLKTLPM</sequence>